<keyword id="KW-0004">4Fe-4S</keyword>
<keyword id="KW-0997">Cell inner membrane</keyword>
<keyword id="KW-1003">Cell membrane</keyword>
<keyword id="KW-0249">Electron transport</keyword>
<keyword id="KW-0408">Iron</keyword>
<keyword id="KW-0411">Iron-sulfur</keyword>
<keyword id="KW-0472">Membrane</keyword>
<keyword id="KW-0479">Metal-binding</keyword>
<keyword id="KW-0677">Repeat</keyword>
<keyword id="KW-1278">Translocase</keyword>
<keyword id="KW-0813">Transport</keyword>
<name>RSXC_SALPB</name>
<evidence type="ECO:0000255" key="1">
    <source>
        <dbReference type="HAMAP-Rule" id="MF_00461"/>
    </source>
</evidence>
<evidence type="ECO:0000256" key="2">
    <source>
        <dbReference type="SAM" id="MobiDB-lite"/>
    </source>
</evidence>
<proteinExistence type="inferred from homology"/>
<sequence>MLKLFSAFRKDKIWDFDGGIHPPEMKTQSNGTPLRQVPLAPRFVIPLKQHIGAEGELCVSVGDRVLRGQALTRGRGRMLPVHAPTSGTVIAIAPHSTAHPSALAELSVIIDADGEDRWIEREGWSDYRAHSREALIERIHQYGVAGLGGAGFPTGVKLQGGGDKITTLIINAAECEPYITADDRLMQDCAAQIVEGIRILAHILQPREVLIGIEDNKPQAISMLRAVLADAHDISLRVIPTKYPSGGAKQLTQILTGKQVPHGGRSSDIGVLMQNVGTAYAVKRAVVDGEPITERVVTLTGEAVSRPGNVWARLGTPVRHLLNDAGFCPSADQMVIMGGPLMGFTLPWLDVPVVKITNCLLAPSVTEMGAPQEEKSCIRCSACADACPADLLPQQLYWFSKGQQHDKATAHHIADCIECGACAWVCPSNIPLVQYFRQEKAEINAIRLEEKRAAEAKARFEARQARLEREKAVRLARHKSAAVQPAAKDQDAIAAALARVKEKQAQATQPVVIQAGSLPDNSAVIAAREARKAQARAKQAAHPVADSALPGDDPRKAAVEAAIARAKARKQEQQAGSEPAEPVDPRKAAVEAAIARAKARKQEQQAGSEPVEAVDPRKAAVEAAIARAKARKQEQQAGGEPAEAVDPRKAAVEAAIARAKARKQEQQAGSEPAEPAAPRKAAVEAAIARAKARKQEQQAGSEPAEAVDPRKAAVAAAIARVQAKKAAQQQVVNED</sequence>
<reference key="1">
    <citation type="submission" date="2007-11" db="EMBL/GenBank/DDBJ databases">
        <authorList>
            <consortium name="The Salmonella enterica serovar Paratyphi B Genome Sequencing Project"/>
            <person name="McClelland M."/>
            <person name="Sanderson E.K."/>
            <person name="Porwollik S."/>
            <person name="Spieth J."/>
            <person name="Clifton W.S."/>
            <person name="Fulton R."/>
            <person name="Cordes M."/>
            <person name="Wollam A."/>
            <person name="Shah N."/>
            <person name="Pepin K."/>
            <person name="Bhonagiri V."/>
            <person name="Nash W."/>
            <person name="Johnson M."/>
            <person name="Thiruvilangam P."/>
            <person name="Wilson R."/>
        </authorList>
    </citation>
    <scope>NUCLEOTIDE SEQUENCE [LARGE SCALE GENOMIC DNA]</scope>
    <source>
        <strain>ATCC BAA-1250 / SPB7</strain>
    </source>
</reference>
<dbReference type="EC" id="7.-.-.-" evidence="1"/>
<dbReference type="EMBL" id="CP000886">
    <property type="protein sequence ID" value="ABX67256.1"/>
    <property type="molecule type" value="Genomic_DNA"/>
</dbReference>
<dbReference type="RefSeq" id="WP_000915662.1">
    <property type="nucleotide sequence ID" value="NC_010102.1"/>
</dbReference>
<dbReference type="SMR" id="A9N025"/>
<dbReference type="KEGG" id="spq:SPAB_01863"/>
<dbReference type="PATRIC" id="fig|1016998.12.peg.1755"/>
<dbReference type="HOGENOM" id="CLU_010808_2_1_6"/>
<dbReference type="BioCyc" id="SENT1016998:SPAB_RS07560-MONOMER"/>
<dbReference type="Proteomes" id="UP000008556">
    <property type="component" value="Chromosome"/>
</dbReference>
<dbReference type="GO" id="GO:0005886">
    <property type="term" value="C:plasma membrane"/>
    <property type="evidence" value="ECO:0007669"/>
    <property type="project" value="UniProtKB-SubCell"/>
</dbReference>
<dbReference type="GO" id="GO:0051539">
    <property type="term" value="F:4 iron, 4 sulfur cluster binding"/>
    <property type="evidence" value="ECO:0007669"/>
    <property type="project" value="UniProtKB-KW"/>
</dbReference>
<dbReference type="GO" id="GO:0009055">
    <property type="term" value="F:electron transfer activity"/>
    <property type="evidence" value="ECO:0007669"/>
    <property type="project" value="InterPro"/>
</dbReference>
<dbReference type="GO" id="GO:0046872">
    <property type="term" value="F:metal ion binding"/>
    <property type="evidence" value="ECO:0007669"/>
    <property type="project" value="UniProtKB-KW"/>
</dbReference>
<dbReference type="GO" id="GO:0022900">
    <property type="term" value="P:electron transport chain"/>
    <property type="evidence" value="ECO:0007669"/>
    <property type="project" value="UniProtKB-UniRule"/>
</dbReference>
<dbReference type="Gene3D" id="3.30.70.20">
    <property type="match status" value="1"/>
</dbReference>
<dbReference type="Gene3D" id="3.40.50.11540">
    <property type="entry name" value="NADH-ubiquinone oxidoreductase 51kDa subunit"/>
    <property type="match status" value="1"/>
</dbReference>
<dbReference type="HAMAP" id="MF_00461">
    <property type="entry name" value="RsxC_RnfC"/>
    <property type="match status" value="1"/>
</dbReference>
<dbReference type="InterPro" id="IPR017896">
    <property type="entry name" value="4Fe4S_Fe-S-bd"/>
</dbReference>
<dbReference type="InterPro" id="IPR017900">
    <property type="entry name" value="4Fe4S_Fe_S_CS"/>
</dbReference>
<dbReference type="InterPro" id="IPR010208">
    <property type="entry name" value="Ion_transpt_RnfC/RsxC"/>
</dbReference>
<dbReference type="InterPro" id="IPR011538">
    <property type="entry name" value="Nuo51_FMN-bd"/>
</dbReference>
<dbReference type="InterPro" id="IPR037225">
    <property type="entry name" value="Nuo51_FMN-bd_sf"/>
</dbReference>
<dbReference type="InterPro" id="IPR026902">
    <property type="entry name" value="RnfC_N"/>
</dbReference>
<dbReference type="InterPro" id="IPR019554">
    <property type="entry name" value="Soluble_ligand-bd"/>
</dbReference>
<dbReference type="NCBIfam" id="NF003454">
    <property type="entry name" value="PRK05035.1"/>
    <property type="match status" value="1"/>
</dbReference>
<dbReference type="NCBIfam" id="TIGR01945">
    <property type="entry name" value="rnfC"/>
    <property type="match status" value="1"/>
</dbReference>
<dbReference type="PANTHER" id="PTHR43034">
    <property type="entry name" value="ION-TRANSLOCATING OXIDOREDUCTASE COMPLEX SUBUNIT C"/>
    <property type="match status" value="1"/>
</dbReference>
<dbReference type="PANTHER" id="PTHR43034:SF2">
    <property type="entry name" value="ION-TRANSLOCATING OXIDOREDUCTASE COMPLEX SUBUNIT C"/>
    <property type="match status" value="1"/>
</dbReference>
<dbReference type="Pfam" id="PF01512">
    <property type="entry name" value="Complex1_51K"/>
    <property type="match status" value="1"/>
</dbReference>
<dbReference type="Pfam" id="PF12838">
    <property type="entry name" value="Fer4_7"/>
    <property type="match status" value="1"/>
</dbReference>
<dbReference type="Pfam" id="PF13375">
    <property type="entry name" value="RnfC_N"/>
    <property type="match status" value="1"/>
</dbReference>
<dbReference type="Pfam" id="PF10531">
    <property type="entry name" value="SLBB"/>
    <property type="match status" value="1"/>
</dbReference>
<dbReference type="SUPFAM" id="SSF46548">
    <property type="entry name" value="alpha-helical ferredoxin"/>
    <property type="match status" value="1"/>
</dbReference>
<dbReference type="SUPFAM" id="SSF142019">
    <property type="entry name" value="Nqo1 FMN-binding domain-like"/>
    <property type="match status" value="1"/>
</dbReference>
<dbReference type="PROSITE" id="PS00198">
    <property type="entry name" value="4FE4S_FER_1"/>
    <property type="match status" value="2"/>
</dbReference>
<dbReference type="PROSITE" id="PS51379">
    <property type="entry name" value="4FE4S_FER_2"/>
    <property type="match status" value="2"/>
</dbReference>
<feature type="chain" id="PRO_1000081143" description="Ion-translocating oxidoreductase complex subunit C">
    <location>
        <begin position="1"/>
        <end position="735"/>
    </location>
</feature>
<feature type="domain" description="4Fe-4S ferredoxin-type 1" evidence="1">
    <location>
        <begin position="368"/>
        <end position="397"/>
    </location>
</feature>
<feature type="domain" description="4Fe-4S ferredoxin-type 2" evidence="1">
    <location>
        <begin position="407"/>
        <end position="436"/>
    </location>
</feature>
<feature type="region of interest" description="Disordered" evidence="2">
    <location>
        <begin position="534"/>
        <end position="715"/>
    </location>
</feature>
<feature type="compositionally biased region" description="Low complexity" evidence="2">
    <location>
        <begin position="666"/>
        <end position="689"/>
    </location>
</feature>
<feature type="binding site" evidence="1">
    <location>
        <position position="377"/>
    </location>
    <ligand>
        <name>[4Fe-4S] cluster</name>
        <dbReference type="ChEBI" id="CHEBI:49883"/>
        <label>1</label>
    </ligand>
</feature>
<feature type="binding site" evidence="1">
    <location>
        <position position="380"/>
    </location>
    <ligand>
        <name>[4Fe-4S] cluster</name>
        <dbReference type="ChEBI" id="CHEBI:49883"/>
        <label>1</label>
    </ligand>
</feature>
<feature type="binding site" evidence="1">
    <location>
        <position position="383"/>
    </location>
    <ligand>
        <name>[4Fe-4S] cluster</name>
        <dbReference type="ChEBI" id="CHEBI:49883"/>
        <label>1</label>
    </ligand>
</feature>
<feature type="binding site" evidence="1">
    <location>
        <position position="387"/>
    </location>
    <ligand>
        <name>[4Fe-4S] cluster</name>
        <dbReference type="ChEBI" id="CHEBI:49883"/>
        <label>2</label>
    </ligand>
</feature>
<feature type="binding site" evidence="1">
    <location>
        <position position="416"/>
    </location>
    <ligand>
        <name>[4Fe-4S] cluster</name>
        <dbReference type="ChEBI" id="CHEBI:49883"/>
        <label>2</label>
    </ligand>
</feature>
<feature type="binding site" evidence="1">
    <location>
        <position position="419"/>
    </location>
    <ligand>
        <name>[4Fe-4S] cluster</name>
        <dbReference type="ChEBI" id="CHEBI:49883"/>
        <label>2</label>
    </ligand>
</feature>
<feature type="binding site" evidence="1">
    <location>
        <position position="422"/>
    </location>
    <ligand>
        <name>[4Fe-4S] cluster</name>
        <dbReference type="ChEBI" id="CHEBI:49883"/>
        <label>2</label>
    </ligand>
</feature>
<feature type="binding site" evidence="1">
    <location>
        <position position="426"/>
    </location>
    <ligand>
        <name>[4Fe-4S] cluster</name>
        <dbReference type="ChEBI" id="CHEBI:49883"/>
        <label>1</label>
    </ligand>
</feature>
<organism>
    <name type="scientific">Salmonella paratyphi B (strain ATCC BAA-1250 / SPB7)</name>
    <dbReference type="NCBI Taxonomy" id="1016998"/>
    <lineage>
        <taxon>Bacteria</taxon>
        <taxon>Pseudomonadati</taxon>
        <taxon>Pseudomonadota</taxon>
        <taxon>Gammaproteobacteria</taxon>
        <taxon>Enterobacterales</taxon>
        <taxon>Enterobacteriaceae</taxon>
        <taxon>Salmonella</taxon>
    </lineage>
</organism>
<gene>
    <name evidence="1" type="primary">rsxC</name>
    <name type="ordered locus">SPAB_01863</name>
</gene>
<protein>
    <recommendedName>
        <fullName evidence="1">Ion-translocating oxidoreductase complex subunit C</fullName>
        <ecNumber evidence="1">7.-.-.-</ecNumber>
    </recommendedName>
    <alternativeName>
        <fullName evidence="1">Rsx electron transport complex subunit C</fullName>
    </alternativeName>
</protein>
<comment type="function">
    <text evidence="1">Part of a membrane-bound complex that couples electron transfer with translocation of ions across the membrane. Required to maintain the reduced state of SoxR.</text>
</comment>
<comment type="cofactor">
    <cofactor evidence="1">
        <name>[4Fe-4S] cluster</name>
        <dbReference type="ChEBI" id="CHEBI:49883"/>
    </cofactor>
    <text evidence="1">Binds 2 [4Fe-4S] clusters per subunit.</text>
</comment>
<comment type="subunit">
    <text evidence="1">The complex is composed of six subunits: RsxA, RsxB, RsxC, RsxD, RsxE and RsxG.</text>
</comment>
<comment type="subcellular location">
    <subcellularLocation>
        <location evidence="1">Cell inner membrane</location>
        <topology evidence="1">Peripheral membrane protein</topology>
    </subcellularLocation>
</comment>
<comment type="similarity">
    <text evidence="1">Belongs to the 4Fe4S bacterial-type ferredoxin family. RnfC subfamily.</text>
</comment>
<accession>A9N025</accession>